<feature type="chain" id="PRO_0000222887" description="Movement protein">
    <location>
        <begin position="1"/>
        <end position="189"/>
    </location>
</feature>
<gene>
    <name type="ORF">ORF3</name>
</gene>
<evidence type="ECO:0000250" key="1"/>
<evidence type="ECO:0000305" key="2"/>
<organism>
    <name type="scientific">Cymbidium ringspot virus</name>
    <name type="common">CymRSV</name>
    <dbReference type="NCBI Taxonomy" id="12144"/>
    <lineage>
        <taxon>Viruses</taxon>
        <taxon>Riboviria</taxon>
        <taxon>Orthornavirae</taxon>
        <taxon>Kitrinoviricota</taxon>
        <taxon>Tolucaviricetes</taxon>
        <taxon>Tolivirales</taxon>
        <taxon>Tombusviridae</taxon>
        <taxon>Procedovirinae</taxon>
        <taxon>Tombusvirus</taxon>
        <taxon>Tombusvirus cymbidii</taxon>
    </lineage>
</organism>
<proteinExistence type="inferred from homology"/>
<accession>P17458</accession>
<organismHost>
    <name type="scientific">Cymbidium</name>
    <dbReference type="NCBI Taxonomy" id="14366"/>
</organismHost>
<organismHost>
    <name type="scientific">Trifolium repens</name>
    <name type="common">Creeping white clover</name>
    <dbReference type="NCBI Taxonomy" id="3899"/>
</organismHost>
<protein>
    <recommendedName>
        <fullName>Movement protein</fullName>
    </recommendedName>
    <alternativeName>
        <fullName>p22</fullName>
    </alternativeName>
</protein>
<sequence>MDTEYQQVNKPWNELYKEVTLGNKLTVNVGMEEEEVLLLPSNFLTKVRVSMSGGYITVRRVRIRIIPLVSRKAGVSGKLYLRDISDTTGQKLHCTELLDLGKEIRLTMPHLDFSVSAKSDVPIAFGFEELVSPFREGRELFSVSLRWQLGLSAQCYSLPPANVKVMYQEDALKALKPSKKKASRTDSSV</sequence>
<reference key="1">
    <citation type="journal article" date="1989" name="J. Gen. Virol.">
        <title>Nucleotide sequence of the 3'-terminal region of cymbidium ringspot virus RNA.</title>
        <authorList>
            <person name="Grieco F."/>
            <person name="Burgyan J."/>
            <person name="Russo M."/>
        </authorList>
    </citation>
    <scope>NUCLEOTIDE SEQUENCE</scope>
</reference>
<name>MVP_CRV</name>
<comment type="function">
    <text evidence="1">Transports viral genome to neighboring plant cells directly through plasmosdesmata, without any budding. The movement protein allows efficient cell to cell propagation, by bypassing the host cell wall barrier (By similarity).</text>
</comment>
<comment type="subcellular location">
    <subcellularLocation>
        <location evidence="1">Host membrane</location>
    </subcellularLocation>
</comment>
<comment type="similarity">
    <text evidence="2">Belongs to the tombusvirus/aureusvirus movement protein p22 family.</text>
</comment>
<dbReference type="PIR" id="JS0270">
    <property type="entry name" value="NKVGCR"/>
</dbReference>
<dbReference type="GO" id="GO:0033644">
    <property type="term" value="C:host cell membrane"/>
    <property type="evidence" value="ECO:0007669"/>
    <property type="project" value="UniProtKB-SubCell"/>
</dbReference>
<dbReference type="GO" id="GO:0016020">
    <property type="term" value="C:membrane"/>
    <property type="evidence" value="ECO:0007669"/>
    <property type="project" value="UniProtKB-KW"/>
</dbReference>
<dbReference type="GO" id="GO:0019028">
    <property type="term" value="C:viral capsid"/>
    <property type="evidence" value="ECO:0007669"/>
    <property type="project" value="InterPro"/>
</dbReference>
<dbReference type="GO" id="GO:0003723">
    <property type="term" value="F:RNA binding"/>
    <property type="evidence" value="ECO:0007669"/>
    <property type="project" value="UniProtKB-KW"/>
</dbReference>
<dbReference type="GO" id="GO:0046740">
    <property type="term" value="P:transport of virus in host, cell to cell"/>
    <property type="evidence" value="ECO:0007669"/>
    <property type="project" value="UniProtKB-KW"/>
</dbReference>
<dbReference type="InterPro" id="IPR005332">
    <property type="entry name" value="TBSV_p22"/>
</dbReference>
<dbReference type="Pfam" id="PF03558">
    <property type="entry name" value="TBSV_P22"/>
    <property type="match status" value="1"/>
</dbReference>
<keyword id="KW-1043">Host membrane</keyword>
<keyword id="KW-0472">Membrane</keyword>
<keyword id="KW-0694">RNA-binding</keyword>
<keyword id="KW-0813">Transport</keyword>
<keyword id="KW-0916">Viral movement protein</keyword>